<reference key="1">
    <citation type="journal article" date="2004" name="Genomics">
        <title>Alpha-synuclein A53T substitution associated with Parkinson disease also marks the divergence of Old World and New World primates.</title>
        <authorList>
            <person name="Hamilton B.A."/>
        </authorList>
    </citation>
    <scope>NUCLEOTIDE SEQUENCE [GENOMIC DNA]</scope>
</reference>
<keyword id="KW-0007">Acetylation</keyword>
<keyword id="KW-0966">Cell projection</keyword>
<keyword id="KW-0186">Copper</keyword>
<keyword id="KW-0963">Cytoplasm</keyword>
<keyword id="KW-0472">Membrane</keyword>
<keyword id="KW-0479">Metal-binding</keyword>
<keyword id="KW-0539">Nucleus</keyword>
<keyword id="KW-0597">Phosphoprotein</keyword>
<keyword id="KW-1185">Reference proteome</keyword>
<keyword id="KW-0677">Repeat</keyword>
<keyword id="KW-0964">Secreted</keyword>
<keyword id="KW-0770">Synapse</keyword>
<keyword id="KW-0832">Ubl conjugation</keyword>
<accession>P61143</accession>
<comment type="function">
    <text evidence="4">Neuronal protein that plays several roles in synaptic activity such as regulation of synaptic vesicle trafficking and subsequent neurotransmitter release (By similarity). Participates as a monomer in synaptic vesicle exocytosis by enhancing vesicle priming, fusion and dilation of exocytotic fusion pores (By similarity). Mechanistically, acts by increasing local Ca(2+) release from microdomains which is essential for the enhancement of ATP-induced exocytosis (By similarity). Also acts as a molecular chaperone in its multimeric membrane-bound state, assisting in the folding of synaptic fusion components called SNAREs (Soluble NSF Attachment Protein REceptors) at presynaptic plasma membrane in conjunction with cysteine string protein-alpha/DNAJC5 (By similarity). This chaperone activity is important to sustain normal SNARE-complex assembly during aging (By similarity). Also plays a role in the regulation of the dopamine neurotransmission by associating with the dopamine transporter (DAT1) and thereby modulating its activity (By similarity).</text>
</comment>
<comment type="subunit">
    <text evidence="2 3 4">Soluble monomer. Homotetramer. A dynamic intracellular population of tetramers and monomers coexists normally and the tetramer plays an essential role in maintaining homeostasis (By similarity). Interacts with UCHL1 (By similarity). Interacts with phospholipase D and histones. Interacts (via N-terminus) with synphilin-1/SNCAIP; this interaction promotes formation of SNCA inclusions in the cytoplasm. Interacts with CALM1. Interacts with STXBP1; this interaction controls SNCA self-replicating aggregation. Interacts with SNARE components VAMP2 and SNAP25; these interactions allows SNARE complex assembly and integrity (By similarity). Interacts with RPH3A and RAB3A (By similarity). Interacts with SERF1A; this interaction promotes the aggregation of SNCA (By similarity). Interacts with SEPTIN4 (By similarity). Interacts with DDX10; this interaction causes DDX10 mislocalization to the nucleoplasm and cytoplasmic inclusions (By similarity).</text>
</comment>
<comment type="subcellular location">
    <subcellularLocation>
        <location evidence="4">Cytoplasm</location>
    </subcellularLocation>
    <subcellularLocation>
        <location evidence="4">Membrane</location>
    </subcellularLocation>
    <subcellularLocation>
        <location evidence="4">Nucleus</location>
    </subcellularLocation>
    <subcellularLocation>
        <location evidence="4">Synapse</location>
    </subcellularLocation>
    <subcellularLocation>
        <location evidence="4">Secreted</location>
    </subcellularLocation>
    <subcellularLocation>
        <location evidence="2">Cell projection</location>
        <location evidence="2">Axon</location>
    </subcellularLocation>
    <text evidence="2 4">Membrane-bound in dopaminergic neurons (By similarity). Expressed and colocalized with SEPTIN4 in dopaminergic axon terminals, especially at the varicosities (By similarity).</text>
</comment>
<comment type="PTM">
    <text evidence="4">Phosphorylated, predominantly on serine residues. Phosphorylated on Tyr-125 upon osmotic stress.</text>
</comment>
<comment type="PTM">
    <text evidence="3">Ubiquitinated. The predominant conjugate is the diubiquitinated form.</text>
</comment>
<comment type="PTM">
    <text evidence="4">Acetylation at Met-1 seems to be important for proper folding and native oligomeric structure.</text>
</comment>
<comment type="similarity">
    <text evidence="6">Belongs to the synuclein family.</text>
</comment>
<gene>
    <name type="primary">SNCA</name>
</gene>
<proteinExistence type="inferred from homology"/>
<name>SYUA_MACMU</name>
<protein>
    <recommendedName>
        <fullName>Alpha-synuclein</fullName>
    </recommendedName>
</protein>
<organism>
    <name type="scientific">Macaca mulatta</name>
    <name type="common">Rhesus macaque</name>
    <dbReference type="NCBI Taxonomy" id="9544"/>
    <lineage>
        <taxon>Eukaryota</taxon>
        <taxon>Metazoa</taxon>
        <taxon>Chordata</taxon>
        <taxon>Craniata</taxon>
        <taxon>Vertebrata</taxon>
        <taxon>Euteleostomi</taxon>
        <taxon>Mammalia</taxon>
        <taxon>Eutheria</taxon>
        <taxon>Euarchontoglires</taxon>
        <taxon>Primates</taxon>
        <taxon>Haplorrhini</taxon>
        <taxon>Catarrhini</taxon>
        <taxon>Cercopithecidae</taxon>
        <taxon>Cercopithecinae</taxon>
        <taxon>Macaca</taxon>
    </lineage>
</organism>
<feature type="chain" id="PRO_0000184025" description="Alpha-synuclein">
    <location>
        <begin position="1"/>
        <end position="140"/>
    </location>
</feature>
<feature type="region of interest" description="Disordered" evidence="5">
    <location>
        <begin position="100"/>
        <end position="140"/>
    </location>
</feature>
<feature type="region of interest" description="Interaction with SERF1A" evidence="4">
    <location>
        <begin position="111"/>
        <end position="140"/>
    </location>
</feature>
<feature type="compositionally biased region" description="Acidic residues" evidence="5">
    <location>
        <begin position="118"/>
        <end position="140"/>
    </location>
</feature>
<feature type="binding site" evidence="1">
    <location>
        <position position="2"/>
    </location>
    <ligand>
        <name>Cu cation</name>
        <dbReference type="ChEBI" id="CHEBI:23378"/>
    </ligand>
</feature>
<feature type="binding site" evidence="1">
    <location>
        <position position="50"/>
    </location>
    <ligand>
        <name>Cu cation</name>
        <dbReference type="ChEBI" id="CHEBI:23378"/>
    </ligand>
</feature>
<feature type="modified residue" description="N-acetylmethionine" evidence="4">
    <location>
        <position position="1"/>
    </location>
</feature>
<feature type="modified residue" description="Phosphoserine" evidence="4">
    <location>
        <position position="87"/>
    </location>
</feature>
<feature type="modified residue" description="Phosphotyrosine; by FYN" evidence="4">
    <location>
        <position position="125"/>
    </location>
</feature>
<feature type="modified residue" description="Phosphoserine; by PLK2" evidence="4">
    <location>
        <position position="129"/>
    </location>
</feature>
<evidence type="ECO:0000250" key="1"/>
<evidence type="ECO:0000250" key="2">
    <source>
        <dbReference type="UniProtKB" id="O55042"/>
    </source>
</evidence>
<evidence type="ECO:0000250" key="3">
    <source>
        <dbReference type="UniProtKB" id="P37377"/>
    </source>
</evidence>
<evidence type="ECO:0000250" key="4">
    <source>
        <dbReference type="UniProtKB" id="P37840"/>
    </source>
</evidence>
<evidence type="ECO:0000256" key="5">
    <source>
        <dbReference type="SAM" id="MobiDB-lite"/>
    </source>
</evidence>
<evidence type="ECO:0000305" key="6"/>
<dbReference type="EMBL" id="AY362314">
    <property type="protein sequence ID" value="AAQ85074.1"/>
    <property type="molecule type" value="Genomic_DNA"/>
</dbReference>
<dbReference type="EMBL" id="AY362310">
    <property type="protein sequence ID" value="AAQ85074.1"/>
    <property type="status" value="JOINED"/>
    <property type="molecule type" value="Genomic_DNA"/>
</dbReference>
<dbReference type="EMBL" id="AY362311">
    <property type="protein sequence ID" value="AAQ85074.1"/>
    <property type="status" value="JOINED"/>
    <property type="molecule type" value="Genomic_DNA"/>
</dbReference>
<dbReference type="EMBL" id="AY362312">
    <property type="protein sequence ID" value="AAQ85074.1"/>
    <property type="status" value="JOINED"/>
    <property type="molecule type" value="Genomic_DNA"/>
</dbReference>
<dbReference type="EMBL" id="AY362313">
    <property type="protein sequence ID" value="AAQ85074.1"/>
    <property type="status" value="JOINED"/>
    <property type="molecule type" value="Genomic_DNA"/>
</dbReference>
<dbReference type="RefSeq" id="XP_014994268.1">
    <property type="nucleotide sequence ID" value="XM_015138782.1"/>
</dbReference>
<dbReference type="RefSeq" id="XP_014994269.1">
    <property type="nucleotide sequence ID" value="XM_015138783.2"/>
</dbReference>
<dbReference type="RefSeq" id="XP_014994270.1">
    <property type="nucleotide sequence ID" value="XM_015138784.2"/>
</dbReference>
<dbReference type="RefSeq" id="XP_014994271.1">
    <property type="nucleotide sequence ID" value="XM_015138785.2"/>
</dbReference>
<dbReference type="RefSeq" id="XP_014994272.1">
    <property type="nucleotide sequence ID" value="XM_015138786.2"/>
</dbReference>
<dbReference type="RefSeq" id="XP_014994273.1">
    <property type="nucleotide sequence ID" value="XM_015138787.2"/>
</dbReference>
<dbReference type="RefSeq" id="XP_014994274.1">
    <property type="nucleotide sequence ID" value="XM_015138788.2"/>
</dbReference>
<dbReference type="RefSeq" id="XP_014994275.1">
    <property type="nucleotide sequence ID" value="XM_015138789.2"/>
</dbReference>
<dbReference type="RefSeq" id="XP_014994276.1">
    <property type="nucleotide sequence ID" value="XM_015138790.2"/>
</dbReference>
<dbReference type="RefSeq" id="XP_014994277.1">
    <property type="nucleotide sequence ID" value="XM_015138791.2"/>
</dbReference>
<dbReference type="RefSeq" id="XP_028704456.1">
    <property type="nucleotide sequence ID" value="XM_028848623.1"/>
</dbReference>
<dbReference type="RefSeq" id="XP_028704457.1">
    <property type="nucleotide sequence ID" value="XM_028848624.1"/>
</dbReference>
<dbReference type="RefSeq" id="XP_028704458.1">
    <property type="nucleotide sequence ID" value="XM_028848625.1"/>
</dbReference>
<dbReference type="BMRB" id="P61143"/>
<dbReference type="FunCoup" id="P61143">
    <property type="interactions" value="306"/>
</dbReference>
<dbReference type="STRING" id="9544.ENSMMUP00000061274"/>
<dbReference type="Ensembl" id="ENSMMUT00000016970.3">
    <property type="protein sequence ID" value="ENSMMUP00000015893.3"/>
    <property type="gene ID" value="ENSMMUG00000012123.4"/>
</dbReference>
<dbReference type="Ensembl" id="ENSMMUT00000061659.2">
    <property type="protein sequence ID" value="ENSMMUP00000050306.1"/>
    <property type="gene ID" value="ENSMMUG00000012123.4"/>
</dbReference>
<dbReference type="Ensembl" id="ENSMMUT00000097374.1">
    <property type="protein sequence ID" value="ENSMMUP00000073855.1"/>
    <property type="gene ID" value="ENSMMUG00000012123.4"/>
</dbReference>
<dbReference type="Ensembl" id="ENSMMUT00000104822.1">
    <property type="protein sequence ID" value="ENSMMUP00000068039.1"/>
    <property type="gene ID" value="ENSMMUG00000012123.4"/>
</dbReference>
<dbReference type="GeneID" id="706985"/>
<dbReference type="KEGG" id="mcc:706985"/>
<dbReference type="CTD" id="6622"/>
<dbReference type="VEuPathDB" id="HostDB:ENSMMUG00000012123"/>
<dbReference type="VGNC" id="VGNC:77668">
    <property type="gene designation" value="SNCA"/>
</dbReference>
<dbReference type="eggNOG" id="ENOG502S0Q7">
    <property type="taxonomic scope" value="Eukaryota"/>
</dbReference>
<dbReference type="GeneTree" id="ENSGT00950000183175"/>
<dbReference type="InParanoid" id="P61143"/>
<dbReference type="OrthoDB" id="9900372at2759"/>
<dbReference type="Proteomes" id="UP000006718">
    <property type="component" value="Chromosome 5"/>
</dbReference>
<dbReference type="Bgee" id="ENSMMUG00000012123">
    <property type="expression patterns" value="Expressed in Ammon's horn and 20 other cell types or tissues"/>
</dbReference>
<dbReference type="ExpressionAtlas" id="P61143">
    <property type="expression patterns" value="baseline"/>
</dbReference>
<dbReference type="GO" id="GO:0043679">
    <property type="term" value="C:axon terminus"/>
    <property type="evidence" value="ECO:0000318"/>
    <property type="project" value="GO_Central"/>
</dbReference>
<dbReference type="GO" id="GO:0005737">
    <property type="term" value="C:cytoplasm"/>
    <property type="evidence" value="ECO:0000318"/>
    <property type="project" value="GO_Central"/>
</dbReference>
<dbReference type="GO" id="GO:0005829">
    <property type="term" value="C:cytosol"/>
    <property type="evidence" value="ECO:0000250"/>
    <property type="project" value="UniProtKB"/>
</dbReference>
<dbReference type="GO" id="GO:0005615">
    <property type="term" value="C:extracellular space"/>
    <property type="evidence" value="ECO:0000250"/>
    <property type="project" value="UniProtKB"/>
</dbReference>
<dbReference type="GO" id="GO:0016020">
    <property type="term" value="C:membrane"/>
    <property type="evidence" value="ECO:0000250"/>
    <property type="project" value="UniProtKB"/>
</dbReference>
<dbReference type="GO" id="GO:0043025">
    <property type="term" value="C:neuronal cell body"/>
    <property type="evidence" value="ECO:0000318"/>
    <property type="project" value="GO_Central"/>
</dbReference>
<dbReference type="GO" id="GO:0005634">
    <property type="term" value="C:nucleus"/>
    <property type="evidence" value="ECO:0000250"/>
    <property type="project" value="UniProtKB"/>
</dbReference>
<dbReference type="GO" id="GO:0005507">
    <property type="term" value="F:copper ion binding"/>
    <property type="evidence" value="ECO:0000250"/>
    <property type="project" value="UniProtKB"/>
</dbReference>
<dbReference type="GO" id="GO:1903136">
    <property type="term" value="F:cuprous ion binding"/>
    <property type="evidence" value="ECO:0000318"/>
    <property type="project" value="GO_Central"/>
</dbReference>
<dbReference type="GO" id="GO:0042802">
    <property type="term" value="F:identical protein binding"/>
    <property type="evidence" value="ECO:0000250"/>
    <property type="project" value="UniProtKB"/>
</dbReference>
<dbReference type="GO" id="GO:0007268">
    <property type="term" value="P:chemical synaptic transmission"/>
    <property type="evidence" value="ECO:0000318"/>
    <property type="project" value="GO_Central"/>
</dbReference>
<dbReference type="GO" id="GO:0014059">
    <property type="term" value="P:regulation of dopamine secretion"/>
    <property type="evidence" value="ECO:0007669"/>
    <property type="project" value="InterPro"/>
</dbReference>
<dbReference type="GO" id="GO:0050808">
    <property type="term" value="P:synapse organization"/>
    <property type="evidence" value="ECO:0000318"/>
    <property type="project" value="GO_Central"/>
</dbReference>
<dbReference type="GO" id="GO:0048488">
    <property type="term" value="P:synaptic vesicle endocytosis"/>
    <property type="evidence" value="ECO:0000318"/>
    <property type="project" value="GO_Central"/>
</dbReference>
<dbReference type="FunFam" id="1.10.287.700:FF:000001">
    <property type="entry name" value="Alpha-synuclein"/>
    <property type="match status" value="1"/>
</dbReference>
<dbReference type="Gene3D" id="1.10.287.700">
    <property type="entry name" value="Helix hairpin bin"/>
    <property type="match status" value="1"/>
</dbReference>
<dbReference type="InterPro" id="IPR001058">
    <property type="entry name" value="Synuclein"/>
</dbReference>
<dbReference type="InterPro" id="IPR002460">
    <property type="entry name" value="Synuclein_alpha"/>
</dbReference>
<dbReference type="PANTHER" id="PTHR13820:SF5">
    <property type="entry name" value="ALPHA-SYNUCLEIN"/>
    <property type="match status" value="1"/>
</dbReference>
<dbReference type="PANTHER" id="PTHR13820">
    <property type="entry name" value="SYNUCLEIN"/>
    <property type="match status" value="1"/>
</dbReference>
<dbReference type="Pfam" id="PF01387">
    <property type="entry name" value="Synuclein"/>
    <property type="match status" value="1"/>
</dbReference>
<dbReference type="PRINTS" id="PR01212">
    <property type="entry name" value="ASYNUCLEIN"/>
</dbReference>
<dbReference type="PRINTS" id="PR01211">
    <property type="entry name" value="SYNUCLEIN"/>
</dbReference>
<dbReference type="SUPFAM" id="SSF118375">
    <property type="entry name" value="Synuclein"/>
    <property type="match status" value="1"/>
</dbReference>
<sequence>MDVFMKGLSKAKEGVVAAAEKTKQGVAEAAGKTKEGVLYVGSKTKEGVVHGVATVAEKTKEQVTNVGGAVVTGVTAVAQKTVEGAGSIAAATGFIKKDQLGKNEEGAPQEGILQDMPVDPDNEAYEMPSEEGYQDYEPEA</sequence>